<reference key="1">
    <citation type="journal article" date="2007" name="Genome Biol.">
        <title>Comparison of Francisella tularensis genomes reveals evolutionary events associated with the emergence of human pathogenic strains.</title>
        <authorList>
            <person name="Rohmer L."/>
            <person name="Fong C."/>
            <person name="Abmayr S."/>
            <person name="Wasnick M."/>
            <person name="Larson Freeman T.J."/>
            <person name="Radey M."/>
            <person name="Guina T."/>
            <person name="Svensson K."/>
            <person name="Hayden H.S."/>
            <person name="Jacobs M."/>
            <person name="Gallagher L.A."/>
            <person name="Manoil C."/>
            <person name="Ernst R.K."/>
            <person name="Drees B."/>
            <person name="Buckley D."/>
            <person name="Haugen E."/>
            <person name="Bovee D."/>
            <person name="Zhou Y."/>
            <person name="Chang J."/>
            <person name="Levy R."/>
            <person name="Lim R."/>
            <person name="Gillett W."/>
            <person name="Guenthener D."/>
            <person name="Kang A."/>
            <person name="Shaffer S.A."/>
            <person name="Taylor G."/>
            <person name="Chen J."/>
            <person name="Gallis B."/>
            <person name="D'Argenio D.A."/>
            <person name="Forsman M."/>
            <person name="Olson M.V."/>
            <person name="Goodlett D.R."/>
            <person name="Kaul R."/>
            <person name="Miller S.I."/>
            <person name="Brittnacher M.J."/>
        </authorList>
    </citation>
    <scope>NUCLEOTIDE SEQUENCE [LARGE SCALE GENOMIC DNA]</scope>
    <source>
        <strain>U112</strain>
    </source>
</reference>
<protein>
    <recommendedName>
        <fullName evidence="1">Small ribosomal subunit protein uS8</fullName>
    </recommendedName>
    <alternativeName>
        <fullName evidence="2">30S ribosomal protein S8</fullName>
    </alternativeName>
</protein>
<organism>
    <name type="scientific">Francisella tularensis subsp. novicida (strain U112)</name>
    <dbReference type="NCBI Taxonomy" id="401614"/>
    <lineage>
        <taxon>Bacteria</taxon>
        <taxon>Pseudomonadati</taxon>
        <taxon>Pseudomonadota</taxon>
        <taxon>Gammaproteobacteria</taxon>
        <taxon>Thiotrichales</taxon>
        <taxon>Francisellaceae</taxon>
        <taxon>Francisella</taxon>
    </lineage>
</organism>
<feature type="chain" id="PRO_0000290840" description="Small ribosomal subunit protein uS8">
    <location>
        <begin position="1"/>
        <end position="132"/>
    </location>
</feature>
<gene>
    <name evidence="1" type="primary">rpsH</name>
    <name type="ordered locus">FTN_0253</name>
</gene>
<comment type="function">
    <text evidence="1">One of the primary rRNA binding proteins, it binds directly to 16S rRNA central domain where it helps coordinate assembly of the platform of the 30S subunit.</text>
</comment>
<comment type="subunit">
    <text evidence="1">Part of the 30S ribosomal subunit. Contacts proteins S5 and S12.</text>
</comment>
<comment type="similarity">
    <text evidence="1">Belongs to the universal ribosomal protein uS8 family.</text>
</comment>
<dbReference type="EMBL" id="CP000439">
    <property type="protein sequence ID" value="ABK89162.1"/>
    <property type="molecule type" value="Genomic_DNA"/>
</dbReference>
<dbReference type="RefSeq" id="WP_003038261.1">
    <property type="nucleotide sequence ID" value="NZ_CP009633.1"/>
</dbReference>
<dbReference type="SMR" id="A0Q4J7"/>
<dbReference type="KEGG" id="ftn:FTN_0253"/>
<dbReference type="KEGG" id="ftx:AW25_1789"/>
<dbReference type="BioCyc" id="FTUL401614:G1G75-264-MONOMER"/>
<dbReference type="Proteomes" id="UP000000762">
    <property type="component" value="Chromosome"/>
</dbReference>
<dbReference type="GO" id="GO:1990904">
    <property type="term" value="C:ribonucleoprotein complex"/>
    <property type="evidence" value="ECO:0007669"/>
    <property type="project" value="UniProtKB-KW"/>
</dbReference>
<dbReference type="GO" id="GO:0005840">
    <property type="term" value="C:ribosome"/>
    <property type="evidence" value="ECO:0007669"/>
    <property type="project" value="UniProtKB-KW"/>
</dbReference>
<dbReference type="GO" id="GO:0019843">
    <property type="term" value="F:rRNA binding"/>
    <property type="evidence" value="ECO:0007669"/>
    <property type="project" value="UniProtKB-UniRule"/>
</dbReference>
<dbReference type="GO" id="GO:0003735">
    <property type="term" value="F:structural constituent of ribosome"/>
    <property type="evidence" value="ECO:0007669"/>
    <property type="project" value="InterPro"/>
</dbReference>
<dbReference type="GO" id="GO:0006412">
    <property type="term" value="P:translation"/>
    <property type="evidence" value="ECO:0007669"/>
    <property type="project" value="UniProtKB-UniRule"/>
</dbReference>
<dbReference type="FunFam" id="3.30.1490.10:FF:000001">
    <property type="entry name" value="30S ribosomal protein S8"/>
    <property type="match status" value="1"/>
</dbReference>
<dbReference type="Gene3D" id="3.30.1370.30">
    <property type="match status" value="1"/>
</dbReference>
<dbReference type="Gene3D" id="3.30.1490.10">
    <property type="match status" value="1"/>
</dbReference>
<dbReference type="HAMAP" id="MF_01302_B">
    <property type="entry name" value="Ribosomal_uS8_B"/>
    <property type="match status" value="1"/>
</dbReference>
<dbReference type="InterPro" id="IPR000630">
    <property type="entry name" value="Ribosomal_uS8"/>
</dbReference>
<dbReference type="InterPro" id="IPR047863">
    <property type="entry name" value="Ribosomal_uS8_CS"/>
</dbReference>
<dbReference type="InterPro" id="IPR035987">
    <property type="entry name" value="Ribosomal_uS8_sf"/>
</dbReference>
<dbReference type="NCBIfam" id="NF001109">
    <property type="entry name" value="PRK00136.1"/>
    <property type="match status" value="1"/>
</dbReference>
<dbReference type="PANTHER" id="PTHR11758">
    <property type="entry name" value="40S RIBOSOMAL PROTEIN S15A"/>
    <property type="match status" value="1"/>
</dbReference>
<dbReference type="Pfam" id="PF00410">
    <property type="entry name" value="Ribosomal_S8"/>
    <property type="match status" value="1"/>
</dbReference>
<dbReference type="SUPFAM" id="SSF56047">
    <property type="entry name" value="Ribosomal protein S8"/>
    <property type="match status" value="1"/>
</dbReference>
<dbReference type="PROSITE" id="PS00053">
    <property type="entry name" value="RIBOSOMAL_S8"/>
    <property type="match status" value="1"/>
</dbReference>
<name>RS8_FRATN</name>
<proteinExistence type="inferred from homology"/>
<keyword id="KW-0687">Ribonucleoprotein</keyword>
<keyword id="KW-0689">Ribosomal protein</keyword>
<keyword id="KW-0694">RNA-binding</keyword>
<keyword id="KW-0699">rRNA-binding</keyword>
<evidence type="ECO:0000255" key="1">
    <source>
        <dbReference type="HAMAP-Rule" id="MF_01302"/>
    </source>
</evidence>
<evidence type="ECO:0000305" key="2"/>
<sequence>MSMQDPIADMFTRIRNGLSAEKEFVSVPFSKIKMEIANFLVNEGYIKSCSKGTTSMGHPSIEIELKYHAGVPVIEMIKRVSRPSLRIYKSHADLPKVYGGYGVAIVSTSKGLVSDRKARDLGVGGEIIGYVA</sequence>
<accession>A0Q4J7</accession>